<evidence type="ECO:0000255" key="1">
    <source>
        <dbReference type="HAMAP-Rule" id="MF_00185"/>
    </source>
</evidence>
<keyword id="KW-0067">ATP-binding</keyword>
<keyword id="KW-0460">Magnesium</keyword>
<keyword id="KW-0547">Nucleotide-binding</keyword>
<keyword id="KW-1185">Reference proteome</keyword>
<keyword id="KW-0808">Transferase</keyword>
<keyword id="KW-0819">tRNA processing</keyword>
<name>MIAA_SHOC1</name>
<accession>Q5WFY6</accession>
<proteinExistence type="inferred from homology"/>
<organism>
    <name type="scientific">Shouchella clausii (strain KSM-K16)</name>
    <name type="common">Alkalihalobacillus clausii</name>
    <dbReference type="NCBI Taxonomy" id="66692"/>
    <lineage>
        <taxon>Bacteria</taxon>
        <taxon>Bacillati</taxon>
        <taxon>Bacillota</taxon>
        <taxon>Bacilli</taxon>
        <taxon>Bacillales</taxon>
        <taxon>Bacillaceae</taxon>
        <taxon>Shouchella</taxon>
    </lineage>
</organism>
<feature type="chain" id="PRO_0000163875" description="tRNA dimethylallyltransferase">
    <location>
        <begin position="1"/>
        <end position="310"/>
    </location>
</feature>
<feature type="region of interest" description="Interaction with substrate tRNA" evidence="1">
    <location>
        <begin position="36"/>
        <end position="39"/>
    </location>
</feature>
<feature type="binding site" evidence="1">
    <location>
        <begin position="11"/>
        <end position="18"/>
    </location>
    <ligand>
        <name>ATP</name>
        <dbReference type="ChEBI" id="CHEBI:30616"/>
    </ligand>
</feature>
<feature type="binding site" evidence="1">
    <location>
        <begin position="13"/>
        <end position="18"/>
    </location>
    <ligand>
        <name>substrate</name>
    </ligand>
</feature>
<feature type="site" description="Interaction with substrate tRNA" evidence="1">
    <location>
        <position position="102"/>
    </location>
</feature>
<feature type="site" description="Interaction with substrate tRNA" evidence="1">
    <location>
        <position position="125"/>
    </location>
</feature>
<reference key="1">
    <citation type="submission" date="2003-10" db="EMBL/GenBank/DDBJ databases">
        <title>The complete genome sequence of the alkaliphilic Bacillus clausii KSM-K16.</title>
        <authorList>
            <person name="Takaki Y."/>
            <person name="Kageyama Y."/>
            <person name="Shimamura S."/>
            <person name="Suzuki H."/>
            <person name="Nishi S."/>
            <person name="Hatada Y."/>
            <person name="Kawai S."/>
            <person name="Ito S."/>
            <person name="Horikoshi K."/>
        </authorList>
    </citation>
    <scope>NUCLEOTIDE SEQUENCE [LARGE SCALE GENOMIC DNA]</scope>
    <source>
        <strain>KSM-K16</strain>
    </source>
</reference>
<dbReference type="EC" id="2.5.1.75" evidence="1"/>
<dbReference type="EMBL" id="AP006627">
    <property type="protein sequence ID" value="BAD64719.1"/>
    <property type="molecule type" value="Genomic_DNA"/>
</dbReference>
<dbReference type="RefSeq" id="WP_011247027.1">
    <property type="nucleotide sequence ID" value="NC_006582.1"/>
</dbReference>
<dbReference type="SMR" id="Q5WFY6"/>
<dbReference type="STRING" id="66692.ABC2184"/>
<dbReference type="KEGG" id="bcl:ABC2184"/>
<dbReference type="eggNOG" id="COG0324">
    <property type="taxonomic scope" value="Bacteria"/>
</dbReference>
<dbReference type="HOGENOM" id="CLU_032616_0_1_9"/>
<dbReference type="OrthoDB" id="9776390at2"/>
<dbReference type="Proteomes" id="UP000001168">
    <property type="component" value="Chromosome"/>
</dbReference>
<dbReference type="GO" id="GO:0005524">
    <property type="term" value="F:ATP binding"/>
    <property type="evidence" value="ECO:0007669"/>
    <property type="project" value="UniProtKB-UniRule"/>
</dbReference>
<dbReference type="GO" id="GO:0052381">
    <property type="term" value="F:tRNA dimethylallyltransferase activity"/>
    <property type="evidence" value="ECO:0007669"/>
    <property type="project" value="UniProtKB-UniRule"/>
</dbReference>
<dbReference type="GO" id="GO:0006400">
    <property type="term" value="P:tRNA modification"/>
    <property type="evidence" value="ECO:0007669"/>
    <property type="project" value="TreeGrafter"/>
</dbReference>
<dbReference type="FunFam" id="1.10.20.140:FF:000001">
    <property type="entry name" value="tRNA dimethylallyltransferase"/>
    <property type="match status" value="1"/>
</dbReference>
<dbReference type="Gene3D" id="1.10.20.140">
    <property type="match status" value="1"/>
</dbReference>
<dbReference type="Gene3D" id="3.40.50.300">
    <property type="entry name" value="P-loop containing nucleotide triphosphate hydrolases"/>
    <property type="match status" value="1"/>
</dbReference>
<dbReference type="HAMAP" id="MF_00185">
    <property type="entry name" value="IPP_trans"/>
    <property type="match status" value="1"/>
</dbReference>
<dbReference type="InterPro" id="IPR039657">
    <property type="entry name" value="Dimethylallyltransferase"/>
</dbReference>
<dbReference type="InterPro" id="IPR018022">
    <property type="entry name" value="IPT"/>
</dbReference>
<dbReference type="InterPro" id="IPR027417">
    <property type="entry name" value="P-loop_NTPase"/>
</dbReference>
<dbReference type="NCBIfam" id="TIGR00174">
    <property type="entry name" value="miaA"/>
    <property type="match status" value="1"/>
</dbReference>
<dbReference type="PANTHER" id="PTHR11088">
    <property type="entry name" value="TRNA DIMETHYLALLYLTRANSFERASE"/>
    <property type="match status" value="1"/>
</dbReference>
<dbReference type="PANTHER" id="PTHR11088:SF60">
    <property type="entry name" value="TRNA DIMETHYLALLYLTRANSFERASE"/>
    <property type="match status" value="1"/>
</dbReference>
<dbReference type="Pfam" id="PF01715">
    <property type="entry name" value="IPPT"/>
    <property type="match status" value="1"/>
</dbReference>
<dbReference type="SUPFAM" id="SSF52540">
    <property type="entry name" value="P-loop containing nucleoside triphosphate hydrolases"/>
    <property type="match status" value="1"/>
</dbReference>
<sequence>MTQEPLIAIVGPTAVGKTALGIELAKTFGAEIISGDSMQVYRTMDIGTAKATVEEMAGIPHHLIDILEPGDTWTVSMFQEKALLAIASIRSRGKWPLLVGGTGLYVQALTHELSFGDAPSDSSFREEMELYASRFGNAALHGKLAKADPNAAEAIHANNVRRVIRALEVIHLTGKPFSEQENGLARPRFDNVLIGLEMERQALYERINRRVDAMMEAGLLEEVHRLYQRGIQGQAIQAIGYKELYAYFDGKCTYDEAIEALKTNSRRYAKRQLTWFKNRSDAVWFHLEEPEAKAKIFDYVHAFLAGKGFA</sequence>
<comment type="function">
    <text evidence="1">Catalyzes the transfer of a dimethylallyl group onto the adenine at position 37 in tRNAs that read codons beginning with uridine, leading to the formation of N6-(dimethylallyl)adenosine (i(6)A).</text>
</comment>
<comment type="catalytic activity">
    <reaction evidence="1">
        <text>adenosine(37) in tRNA + dimethylallyl diphosphate = N(6)-dimethylallyladenosine(37) in tRNA + diphosphate</text>
        <dbReference type="Rhea" id="RHEA:26482"/>
        <dbReference type="Rhea" id="RHEA-COMP:10162"/>
        <dbReference type="Rhea" id="RHEA-COMP:10375"/>
        <dbReference type="ChEBI" id="CHEBI:33019"/>
        <dbReference type="ChEBI" id="CHEBI:57623"/>
        <dbReference type="ChEBI" id="CHEBI:74411"/>
        <dbReference type="ChEBI" id="CHEBI:74415"/>
        <dbReference type="EC" id="2.5.1.75"/>
    </reaction>
</comment>
<comment type="cofactor">
    <cofactor evidence="1">
        <name>Mg(2+)</name>
        <dbReference type="ChEBI" id="CHEBI:18420"/>
    </cofactor>
</comment>
<comment type="subunit">
    <text evidence="1">Monomer.</text>
</comment>
<comment type="similarity">
    <text evidence="1">Belongs to the IPP transferase family.</text>
</comment>
<protein>
    <recommendedName>
        <fullName evidence="1">tRNA dimethylallyltransferase</fullName>
        <ecNumber evidence="1">2.5.1.75</ecNumber>
    </recommendedName>
    <alternativeName>
        <fullName evidence="1">Dimethylallyl diphosphate:tRNA dimethylallyltransferase</fullName>
        <shortName evidence="1">DMAPP:tRNA dimethylallyltransferase</shortName>
        <shortName evidence="1">DMATase</shortName>
    </alternativeName>
    <alternativeName>
        <fullName evidence="1">Isopentenyl-diphosphate:tRNA isopentenyltransferase</fullName>
        <shortName evidence="1">IPP transferase</shortName>
        <shortName evidence="1">IPPT</shortName>
        <shortName evidence="1">IPTase</shortName>
    </alternativeName>
</protein>
<gene>
    <name evidence="1" type="primary">miaA</name>
    <name type="ordered locus">ABC2184</name>
</gene>